<proteinExistence type="inferred from homology"/>
<gene>
    <name evidence="1" type="primary">pheS</name>
    <name type="ordered locus">jk0839</name>
</gene>
<reference key="1">
    <citation type="journal article" date="2005" name="J. Bacteriol.">
        <title>Complete genome sequence and analysis of the multiresistant nosocomial pathogen Corynebacterium jeikeium K411, a lipid-requiring bacterium of the human skin flora.</title>
        <authorList>
            <person name="Tauch A."/>
            <person name="Kaiser O."/>
            <person name="Hain T."/>
            <person name="Goesmann A."/>
            <person name="Weisshaar B."/>
            <person name="Albersmeier A."/>
            <person name="Bekel T."/>
            <person name="Bischoff N."/>
            <person name="Brune I."/>
            <person name="Chakraborty T."/>
            <person name="Kalinowski J."/>
            <person name="Meyer F."/>
            <person name="Rupp O."/>
            <person name="Schneiker S."/>
            <person name="Viehoever P."/>
            <person name="Puehler A."/>
        </authorList>
    </citation>
    <scope>NUCLEOTIDE SEQUENCE [LARGE SCALE GENOMIC DNA]</scope>
    <source>
        <strain>K411</strain>
    </source>
</reference>
<dbReference type="EC" id="6.1.1.20" evidence="1"/>
<dbReference type="EMBL" id="CR931997">
    <property type="protein sequence ID" value="CAI37001.1"/>
    <property type="molecule type" value="Genomic_DNA"/>
</dbReference>
<dbReference type="RefSeq" id="WP_011273440.1">
    <property type="nucleotide sequence ID" value="NC_007164.1"/>
</dbReference>
<dbReference type="SMR" id="Q4JW06"/>
<dbReference type="STRING" id="306537.jk0839"/>
<dbReference type="KEGG" id="cjk:jk0839"/>
<dbReference type="PATRIC" id="fig|306537.10.peg.850"/>
<dbReference type="eggNOG" id="COG0016">
    <property type="taxonomic scope" value="Bacteria"/>
</dbReference>
<dbReference type="HOGENOM" id="CLU_025086_0_1_11"/>
<dbReference type="OrthoDB" id="9800719at2"/>
<dbReference type="Proteomes" id="UP000000545">
    <property type="component" value="Chromosome"/>
</dbReference>
<dbReference type="GO" id="GO:0005737">
    <property type="term" value="C:cytoplasm"/>
    <property type="evidence" value="ECO:0007669"/>
    <property type="project" value="UniProtKB-SubCell"/>
</dbReference>
<dbReference type="GO" id="GO:0005524">
    <property type="term" value="F:ATP binding"/>
    <property type="evidence" value="ECO:0007669"/>
    <property type="project" value="UniProtKB-UniRule"/>
</dbReference>
<dbReference type="GO" id="GO:0000287">
    <property type="term" value="F:magnesium ion binding"/>
    <property type="evidence" value="ECO:0007669"/>
    <property type="project" value="UniProtKB-UniRule"/>
</dbReference>
<dbReference type="GO" id="GO:0004826">
    <property type="term" value="F:phenylalanine-tRNA ligase activity"/>
    <property type="evidence" value="ECO:0007669"/>
    <property type="project" value="UniProtKB-UniRule"/>
</dbReference>
<dbReference type="GO" id="GO:0000049">
    <property type="term" value="F:tRNA binding"/>
    <property type="evidence" value="ECO:0007669"/>
    <property type="project" value="InterPro"/>
</dbReference>
<dbReference type="GO" id="GO:0006432">
    <property type="term" value="P:phenylalanyl-tRNA aminoacylation"/>
    <property type="evidence" value="ECO:0007669"/>
    <property type="project" value="UniProtKB-UniRule"/>
</dbReference>
<dbReference type="CDD" id="cd00496">
    <property type="entry name" value="PheRS_alpha_core"/>
    <property type="match status" value="1"/>
</dbReference>
<dbReference type="FunFam" id="3.30.930.10:FF:000003">
    <property type="entry name" value="Phenylalanine--tRNA ligase alpha subunit"/>
    <property type="match status" value="1"/>
</dbReference>
<dbReference type="Gene3D" id="3.30.930.10">
    <property type="entry name" value="Bira Bifunctional Protein, Domain 2"/>
    <property type="match status" value="1"/>
</dbReference>
<dbReference type="HAMAP" id="MF_00281">
    <property type="entry name" value="Phe_tRNA_synth_alpha1"/>
    <property type="match status" value="1"/>
</dbReference>
<dbReference type="InterPro" id="IPR006195">
    <property type="entry name" value="aa-tRNA-synth_II"/>
</dbReference>
<dbReference type="InterPro" id="IPR045864">
    <property type="entry name" value="aa-tRNA-synth_II/BPL/LPL"/>
</dbReference>
<dbReference type="InterPro" id="IPR004529">
    <property type="entry name" value="Phe-tRNA-synth_IIc_asu"/>
</dbReference>
<dbReference type="InterPro" id="IPR004188">
    <property type="entry name" value="Phe-tRNA_ligase_II_N"/>
</dbReference>
<dbReference type="InterPro" id="IPR022911">
    <property type="entry name" value="Phe_tRNA_ligase_alpha1_bac"/>
</dbReference>
<dbReference type="InterPro" id="IPR002319">
    <property type="entry name" value="Phenylalanyl-tRNA_Synthase"/>
</dbReference>
<dbReference type="InterPro" id="IPR010978">
    <property type="entry name" value="tRNA-bd_arm"/>
</dbReference>
<dbReference type="NCBIfam" id="TIGR00468">
    <property type="entry name" value="pheS"/>
    <property type="match status" value="1"/>
</dbReference>
<dbReference type="PANTHER" id="PTHR11538:SF41">
    <property type="entry name" value="PHENYLALANINE--TRNA LIGASE, MITOCHONDRIAL"/>
    <property type="match status" value="1"/>
</dbReference>
<dbReference type="PANTHER" id="PTHR11538">
    <property type="entry name" value="PHENYLALANYL-TRNA SYNTHETASE"/>
    <property type="match status" value="1"/>
</dbReference>
<dbReference type="Pfam" id="PF02912">
    <property type="entry name" value="Phe_tRNA-synt_N"/>
    <property type="match status" value="1"/>
</dbReference>
<dbReference type="Pfam" id="PF01409">
    <property type="entry name" value="tRNA-synt_2d"/>
    <property type="match status" value="1"/>
</dbReference>
<dbReference type="SUPFAM" id="SSF55681">
    <property type="entry name" value="Class II aaRS and biotin synthetases"/>
    <property type="match status" value="1"/>
</dbReference>
<dbReference type="SUPFAM" id="SSF46589">
    <property type="entry name" value="tRNA-binding arm"/>
    <property type="match status" value="1"/>
</dbReference>
<dbReference type="PROSITE" id="PS50862">
    <property type="entry name" value="AA_TRNA_LIGASE_II"/>
    <property type="match status" value="1"/>
</dbReference>
<organism>
    <name type="scientific">Corynebacterium jeikeium (strain K411)</name>
    <dbReference type="NCBI Taxonomy" id="306537"/>
    <lineage>
        <taxon>Bacteria</taxon>
        <taxon>Bacillati</taxon>
        <taxon>Actinomycetota</taxon>
        <taxon>Actinomycetes</taxon>
        <taxon>Mycobacteriales</taxon>
        <taxon>Corynebacteriaceae</taxon>
        <taxon>Corynebacterium</taxon>
    </lineage>
</organism>
<name>SYFA_CORJK</name>
<protein>
    <recommendedName>
        <fullName evidence="1">Phenylalanine--tRNA ligase alpha subunit</fullName>
        <ecNumber evidence="1">6.1.1.20</ecNumber>
    </recommendedName>
    <alternativeName>
        <fullName evidence="1">Phenylalanyl-tRNA synthetase alpha subunit</fullName>
        <shortName evidence="1">PheRS</shortName>
    </alternativeName>
</protein>
<comment type="catalytic activity">
    <reaction evidence="1">
        <text>tRNA(Phe) + L-phenylalanine + ATP = L-phenylalanyl-tRNA(Phe) + AMP + diphosphate + H(+)</text>
        <dbReference type="Rhea" id="RHEA:19413"/>
        <dbReference type="Rhea" id="RHEA-COMP:9668"/>
        <dbReference type="Rhea" id="RHEA-COMP:9699"/>
        <dbReference type="ChEBI" id="CHEBI:15378"/>
        <dbReference type="ChEBI" id="CHEBI:30616"/>
        <dbReference type="ChEBI" id="CHEBI:33019"/>
        <dbReference type="ChEBI" id="CHEBI:58095"/>
        <dbReference type="ChEBI" id="CHEBI:78442"/>
        <dbReference type="ChEBI" id="CHEBI:78531"/>
        <dbReference type="ChEBI" id="CHEBI:456215"/>
        <dbReference type="EC" id="6.1.1.20"/>
    </reaction>
</comment>
<comment type="cofactor">
    <cofactor evidence="1">
        <name>Mg(2+)</name>
        <dbReference type="ChEBI" id="CHEBI:18420"/>
    </cofactor>
    <text evidence="1">Binds 2 magnesium ions per tetramer.</text>
</comment>
<comment type="subunit">
    <text evidence="1">Tetramer of two alpha and two beta subunits.</text>
</comment>
<comment type="subcellular location">
    <subcellularLocation>
        <location evidence="1">Cytoplasm</location>
    </subcellularLocation>
</comment>
<comment type="similarity">
    <text evidence="1">Belongs to the class-II aminoacyl-tRNA synthetase family. Phe-tRNA synthetase alpha subunit type 1 subfamily.</text>
</comment>
<keyword id="KW-0030">Aminoacyl-tRNA synthetase</keyword>
<keyword id="KW-0067">ATP-binding</keyword>
<keyword id="KW-0963">Cytoplasm</keyword>
<keyword id="KW-0436">Ligase</keyword>
<keyword id="KW-0460">Magnesium</keyword>
<keyword id="KW-0479">Metal-binding</keyword>
<keyword id="KW-0547">Nucleotide-binding</keyword>
<keyword id="KW-0648">Protein biosynthesis</keyword>
<keyword id="KW-1185">Reference proteome</keyword>
<evidence type="ECO:0000255" key="1">
    <source>
        <dbReference type="HAMAP-Rule" id="MF_00281"/>
    </source>
</evidence>
<evidence type="ECO:0000256" key="2">
    <source>
        <dbReference type="SAM" id="MobiDB-lite"/>
    </source>
</evidence>
<accession>Q4JW06</accession>
<sequence length="351" mass="38866">MTDSADTPQVELSEQGLNAAADAAEKAFAEAANLEELAAARREHLGDDAPIPAARRSLGSLPKDQRKDAGRLVNMARGRVEKRFAQVKAELERKRNEEVLRAERIDVTEPTTRGQRGAQHPITILSEQIADIFVGMGWEIADGPEVEAEYFNFDSLNFIPDHPARTLQDTFHIAPEGSGQVLRTHTSPVQMRTMLSRDLPIYIACPGRVFRTDELDATHTPVFHQVEGLAVDKGLTMAHLKGTLDHLAKTLFGEEAKTRIRPNYFPFTEPSAEVDVWFADKKGGAGWIEWGGCGMVNPNVLIAAGVDPEEYSGFAFGMGIERTLQFRNGLPDMRDMVEGDVRFTLPFGVRR</sequence>
<feature type="chain" id="PRO_0000231976" description="Phenylalanine--tRNA ligase alpha subunit">
    <location>
        <begin position="1"/>
        <end position="351"/>
    </location>
</feature>
<feature type="region of interest" description="Disordered" evidence="2">
    <location>
        <begin position="45"/>
        <end position="69"/>
    </location>
</feature>
<feature type="binding site" evidence="1">
    <location>
        <position position="269"/>
    </location>
    <ligand>
        <name>Mg(2+)</name>
        <dbReference type="ChEBI" id="CHEBI:18420"/>
        <note>shared with beta subunit</note>
    </ligand>
</feature>